<protein>
    <recommendedName>
        <fullName>Aldo-keto reductase family 1 member B7</fullName>
        <ecNumber evidence="3 4">1.1.1.21</ecNumber>
    </recommendedName>
    <alternativeName>
        <fullName>Aldehyde reductase</fullName>
    </alternativeName>
    <alternativeName>
        <fullName evidence="5">Aldose reductase-like protein AKR1B14</fullName>
    </alternativeName>
    <alternativeName>
        <fullName>Aldose reductase-related protein 1</fullName>
    </alternativeName>
</protein>
<name>ALD1_RAT</name>
<sequence>MTTFVKLRTKAKMPLVGLGTWKSPPGQVKEAVKAAIDAGYRHFDCAYVYQNESEVGEAIQEKIKEKAVRREDLFIVSKLWSTFFEKSLMKEAFQKTLSDLKLDYLDLYLIHWPQGLQAGKEFLPKDSQGKVLMSKSTFLDAWEGMEELVDQGLVKALGVSNFNHFQIERLLNKPGLKHKPVTNQVECHPYLTQEKLIQYCHSKGIAVIAYSPLGSPDRPYAKPEDPVVLEIPKIKEIAAKHKKTIAQVLIRFHVQRNVAVIPKSVTLSHIKENIQVFDFQLSEEDMAAILSLNRNWRACGLFVTSDEEDFPFHEEY</sequence>
<comment type="function">
    <text evidence="2 3">Reduces a broad range of aliphatic and aromatic aldehydes to the corresponding alcohols (PubMed:21048316). Reduces prostaglandins (By similarity). May play a role in the metabolism of xenobiotic aromatic aldehydes.</text>
</comment>
<comment type="catalytic activity">
    <reaction evidence="3 4">
        <text>an alditol + NADP(+) = an aldose + NADPH + H(+)</text>
        <dbReference type="Rhea" id="RHEA:12789"/>
        <dbReference type="Rhea" id="RHEA-COMP:9554"/>
        <dbReference type="Rhea" id="RHEA-COMP:9555"/>
        <dbReference type="ChEBI" id="CHEBI:15378"/>
        <dbReference type="ChEBI" id="CHEBI:15693"/>
        <dbReference type="ChEBI" id="CHEBI:17522"/>
        <dbReference type="ChEBI" id="CHEBI:57783"/>
        <dbReference type="ChEBI" id="CHEBI:58349"/>
        <dbReference type="EC" id="1.1.1.21"/>
    </reaction>
</comment>
<comment type="catalytic activity">
    <reaction evidence="2">
        <text>prostaglandin F2alpha + NADP(+) = prostaglandin H2 + NADPH + H(+)</text>
        <dbReference type="Rhea" id="RHEA:45312"/>
        <dbReference type="ChEBI" id="CHEBI:15378"/>
        <dbReference type="ChEBI" id="CHEBI:57404"/>
        <dbReference type="ChEBI" id="CHEBI:57405"/>
        <dbReference type="ChEBI" id="CHEBI:57783"/>
        <dbReference type="ChEBI" id="CHEBI:58349"/>
    </reaction>
</comment>
<comment type="activity regulation">
    <text evidence="3">Inhibited by tolrestat and epalrestat.</text>
</comment>
<comment type="biophysicochemical properties">
    <kinetics>
        <KM evidence="3 4">1.5 uM for NADPH</KM>
        <KM evidence="3 4">220 uM for NADH</KM>
        <KM evidence="3 4">0.16 uM for 4-oxo-2-nonenal</KM>
        <KM evidence="3 4">37 uM for geraniol</KM>
        <KM evidence="3 4">1.5 uM for 4-nitrobenzaldehyde</KM>
    </kinetics>
    <phDependence>
        <text evidence="3 4">Optimum pH is 6.5-7.</text>
    </phDependence>
</comment>
<comment type="subunit">
    <text evidence="1">Monomer.</text>
</comment>
<comment type="subcellular location">
    <subcellularLocation>
        <location evidence="1">Cytoplasm</location>
    </subcellularLocation>
</comment>
<comment type="similarity">
    <text evidence="6">Belongs to the aldo/keto reductase family.</text>
</comment>
<dbReference type="EC" id="1.1.1.21" evidence="3 4"/>
<dbReference type="EMBL" id="CH473959">
    <property type="protein sequence ID" value="EDM15308.1"/>
    <property type="molecule type" value="Genomic_DNA"/>
</dbReference>
<dbReference type="EMBL" id="BC086563">
    <property type="protein sequence ID" value="AAH86563.1"/>
    <property type="molecule type" value="mRNA"/>
</dbReference>
<dbReference type="RefSeq" id="NP_446233.2">
    <property type="nucleotide sequence ID" value="NM_053781.3"/>
</dbReference>
<dbReference type="PDB" id="3O3R">
    <property type="method" value="X-ray"/>
    <property type="resolution" value="1.86 A"/>
    <property type="chains" value="A/B=1-316"/>
</dbReference>
<dbReference type="PDB" id="3QKZ">
    <property type="method" value="X-ray"/>
    <property type="resolution" value="1.87 A"/>
    <property type="chains" value="A/B=1-316"/>
</dbReference>
<dbReference type="PDBsum" id="3O3R"/>
<dbReference type="PDBsum" id="3QKZ"/>
<dbReference type="SMR" id="Q5RJP0"/>
<dbReference type="FunCoup" id="Q5RJP0">
    <property type="interactions" value="260"/>
</dbReference>
<dbReference type="STRING" id="10116.ENSRNOP00000013423"/>
<dbReference type="BindingDB" id="Q5RJP0"/>
<dbReference type="ChEMBL" id="CHEMBL3421523"/>
<dbReference type="DrugCentral" id="Q5RJP0"/>
<dbReference type="iPTMnet" id="Q5RJP0"/>
<dbReference type="PhosphoSitePlus" id="Q5RJP0"/>
<dbReference type="jPOST" id="Q5RJP0"/>
<dbReference type="PaxDb" id="10116-ENSRNOP00000013423"/>
<dbReference type="Ensembl" id="ENSRNOT00000013423.3">
    <property type="protein sequence ID" value="ENSRNOP00000013423.2"/>
    <property type="gene ID" value="ENSRNOG00000009875.3"/>
</dbReference>
<dbReference type="GeneID" id="116463"/>
<dbReference type="KEGG" id="rno:116463"/>
<dbReference type="UCSC" id="RGD:620257">
    <property type="organism name" value="rat"/>
</dbReference>
<dbReference type="AGR" id="RGD:620257"/>
<dbReference type="CTD" id="11997"/>
<dbReference type="RGD" id="620257">
    <property type="gene designation" value="Akr1b7"/>
</dbReference>
<dbReference type="eggNOG" id="KOG1577">
    <property type="taxonomic scope" value="Eukaryota"/>
</dbReference>
<dbReference type="GeneTree" id="ENSGT00940000154773"/>
<dbReference type="HOGENOM" id="CLU_023205_0_0_1"/>
<dbReference type="InParanoid" id="Q5RJP0"/>
<dbReference type="OMA" id="GTKWQWL"/>
<dbReference type="OrthoDB" id="416253at2759"/>
<dbReference type="PhylomeDB" id="Q5RJP0"/>
<dbReference type="TreeFam" id="TF106492"/>
<dbReference type="Reactome" id="R-RNO-193144">
    <property type="pathway name" value="Estrogen biosynthesis"/>
</dbReference>
<dbReference type="EvolutionaryTrace" id="Q5RJP0"/>
<dbReference type="PRO" id="PR:Q5RJP0"/>
<dbReference type="Proteomes" id="UP000002494">
    <property type="component" value="Chromosome 4"/>
</dbReference>
<dbReference type="Proteomes" id="UP000234681">
    <property type="component" value="Chromosome 4"/>
</dbReference>
<dbReference type="Bgee" id="ENSRNOG00000009875">
    <property type="expression patterns" value="Expressed in ovary and 8 other cell types or tissues"/>
</dbReference>
<dbReference type="GO" id="GO:0005829">
    <property type="term" value="C:cytosol"/>
    <property type="evidence" value="ECO:0000318"/>
    <property type="project" value="GO_Central"/>
</dbReference>
<dbReference type="GO" id="GO:0005739">
    <property type="term" value="C:mitochondrion"/>
    <property type="evidence" value="ECO:0000318"/>
    <property type="project" value="GO_Central"/>
</dbReference>
<dbReference type="GO" id="GO:0004033">
    <property type="term" value="F:aldo-keto reductase (NADPH) activity"/>
    <property type="evidence" value="ECO:0000304"/>
    <property type="project" value="RGD"/>
</dbReference>
<dbReference type="GO" id="GO:0004032">
    <property type="term" value="F:aldose reductase (NADPH) activity"/>
    <property type="evidence" value="ECO:0000318"/>
    <property type="project" value="GO_Central"/>
</dbReference>
<dbReference type="GO" id="GO:0036130">
    <property type="term" value="F:prostaglandin H2 endoperoxidase reductase activity"/>
    <property type="evidence" value="ECO:0007669"/>
    <property type="project" value="RHEA"/>
</dbReference>
<dbReference type="CDD" id="cd19107">
    <property type="entry name" value="AKR_AKR1B1-19"/>
    <property type="match status" value="1"/>
</dbReference>
<dbReference type="FunFam" id="3.20.20.100:FF:000009">
    <property type="entry name" value="Aldo-keto reductase family 1 member B1"/>
    <property type="match status" value="1"/>
</dbReference>
<dbReference type="Gene3D" id="3.20.20.100">
    <property type="entry name" value="NADP-dependent oxidoreductase domain"/>
    <property type="match status" value="1"/>
</dbReference>
<dbReference type="InterPro" id="IPR020471">
    <property type="entry name" value="AKR"/>
</dbReference>
<dbReference type="InterPro" id="IPR018170">
    <property type="entry name" value="Aldo/ket_reductase_CS"/>
</dbReference>
<dbReference type="InterPro" id="IPR023210">
    <property type="entry name" value="NADP_OxRdtase_dom"/>
</dbReference>
<dbReference type="InterPro" id="IPR036812">
    <property type="entry name" value="NADP_OxRdtase_dom_sf"/>
</dbReference>
<dbReference type="PANTHER" id="PTHR11732">
    <property type="entry name" value="ALDO/KETO REDUCTASE"/>
    <property type="match status" value="1"/>
</dbReference>
<dbReference type="Pfam" id="PF00248">
    <property type="entry name" value="Aldo_ket_red"/>
    <property type="match status" value="1"/>
</dbReference>
<dbReference type="PIRSF" id="PIRSF000097">
    <property type="entry name" value="AKR"/>
    <property type="match status" value="1"/>
</dbReference>
<dbReference type="PRINTS" id="PR00069">
    <property type="entry name" value="ALDKETRDTASE"/>
</dbReference>
<dbReference type="SUPFAM" id="SSF51430">
    <property type="entry name" value="NAD(P)-linked oxidoreductase"/>
    <property type="match status" value="1"/>
</dbReference>
<dbReference type="PROSITE" id="PS00798">
    <property type="entry name" value="ALDOKETO_REDUCTASE_1"/>
    <property type="match status" value="1"/>
</dbReference>
<dbReference type="PROSITE" id="PS00062">
    <property type="entry name" value="ALDOKETO_REDUCTASE_2"/>
    <property type="match status" value="1"/>
</dbReference>
<accession>Q5RJP0</accession>
<gene>
    <name type="primary">Akr1b7</name>
    <name type="synonym">Akr1b14</name>
</gene>
<proteinExistence type="evidence at protein level"/>
<organism>
    <name type="scientific">Rattus norvegicus</name>
    <name type="common">Rat</name>
    <dbReference type="NCBI Taxonomy" id="10116"/>
    <lineage>
        <taxon>Eukaryota</taxon>
        <taxon>Metazoa</taxon>
        <taxon>Chordata</taxon>
        <taxon>Craniata</taxon>
        <taxon>Vertebrata</taxon>
        <taxon>Euteleostomi</taxon>
        <taxon>Mammalia</taxon>
        <taxon>Eutheria</taxon>
        <taxon>Euarchontoglires</taxon>
        <taxon>Glires</taxon>
        <taxon>Rodentia</taxon>
        <taxon>Myomorpha</taxon>
        <taxon>Muroidea</taxon>
        <taxon>Muridae</taxon>
        <taxon>Murinae</taxon>
        <taxon>Rattus</taxon>
    </lineage>
</organism>
<evidence type="ECO:0000250" key="1"/>
<evidence type="ECO:0000250" key="2">
    <source>
        <dbReference type="UniProtKB" id="P21300"/>
    </source>
</evidence>
<evidence type="ECO:0000269" key="3">
    <source>
    </source>
</evidence>
<evidence type="ECO:0000269" key="4">
    <source>
    </source>
</evidence>
<evidence type="ECO:0000303" key="5">
    <source>
    </source>
</evidence>
<evidence type="ECO:0000305" key="6"/>
<evidence type="ECO:0007829" key="7">
    <source>
        <dbReference type="PDB" id="3O3R"/>
    </source>
</evidence>
<evidence type="ECO:0007829" key="8">
    <source>
        <dbReference type="PDB" id="3QKZ"/>
    </source>
</evidence>
<feature type="chain" id="PRO_0000415351" description="Aldo-keto reductase family 1 member B7">
    <location>
        <begin position="1"/>
        <end position="316"/>
    </location>
</feature>
<feature type="active site" description="Proton donor" evidence="1">
    <location>
        <position position="49"/>
    </location>
</feature>
<feature type="binding site" evidence="4">
    <location>
        <begin position="20"/>
        <end position="21"/>
    </location>
    <ligand>
        <name>NADP(+)</name>
        <dbReference type="ChEBI" id="CHEBI:58349"/>
    </ligand>
</feature>
<feature type="binding site" evidence="4">
    <location>
        <position position="44"/>
    </location>
    <ligand>
        <name>NADP(+)</name>
        <dbReference type="ChEBI" id="CHEBI:58349"/>
    </ligand>
</feature>
<feature type="binding site" evidence="4">
    <location>
        <begin position="160"/>
        <end position="161"/>
    </location>
    <ligand>
        <name>NADP(+)</name>
        <dbReference type="ChEBI" id="CHEBI:58349"/>
    </ligand>
</feature>
<feature type="binding site" evidence="4">
    <location>
        <position position="184"/>
    </location>
    <ligand>
        <name>NADP(+)</name>
        <dbReference type="ChEBI" id="CHEBI:58349"/>
    </ligand>
</feature>
<feature type="binding site" evidence="4">
    <location>
        <begin position="210"/>
        <end position="215"/>
    </location>
    <ligand>
        <name>NADP(+)</name>
        <dbReference type="ChEBI" id="CHEBI:58349"/>
    </ligand>
</feature>
<feature type="binding site" evidence="4">
    <location>
        <begin position="263"/>
        <end position="269"/>
    </location>
    <ligand>
        <name>NADP(+)</name>
        <dbReference type="ChEBI" id="CHEBI:58349"/>
    </ligand>
</feature>
<feature type="binding site" evidence="4">
    <location>
        <position position="273"/>
    </location>
    <ligand>
        <name>NADP(+)</name>
        <dbReference type="ChEBI" id="CHEBI:58349"/>
    </ligand>
</feature>
<feature type="site" description="Lowers pKa of active site Tyr" evidence="1">
    <location>
        <position position="78"/>
    </location>
</feature>
<feature type="mutagenesis site" description="Reduced affinity for NADP." evidence="4">
    <original>H</original>
    <variation>F</variation>
    <variation>R</variation>
    <location>
        <position position="269"/>
    </location>
</feature>
<feature type="mutagenesis site" description="Strongly reduced affinity for NADP." evidence="4">
    <original>H</original>
    <variation>M</variation>
    <location>
        <position position="269"/>
    </location>
</feature>
<feature type="strand" evidence="7">
    <location>
        <begin position="4"/>
        <end position="6"/>
    </location>
</feature>
<feature type="strand" evidence="7">
    <location>
        <begin position="12"/>
        <end position="19"/>
    </location>
</feature>
<feature type="helix" evidence="7">
    <location>
        <begin position="27"/>
        <end position="37"/>
    </location>
</feature>
<feature type="strand" evidence="7">
    <location>
        <begin position="42"/>
        <end position="44"/>
    </location>
</feature>
<feature type="helix" evidence="7">
    <location>
        <begin position="47"/>
        <end position="49"/>
    </location>
</feature>
<feature type="helix" evidence="7">
    <location>
        <begin position="52"/>
        <end position="64"/>
    </location>
</feature>
<feature type="helix" evidence="7">
    <location>
        <begin position="70"/>
        <end position="72"/>
    </location>
</feature>
<feature type="strand" evidence="7">
    <location>
        <begin position="74"/>
        <end position="79"/>
    </location>
</feature>
<feature type="helix" evidence="7">
    <location>
        <begin position="81"/>
        <end position="83"/>
    </location>
</feature>
<feature type="helix" evidence="7">
    <location>
        <begin position="86"/>
        <end position="100"/>
    </location>
</feature>
<feature type="strand" evidence="7">
    <location>
        <begin position="105"/>
        <end position="111"/>
    </location>
</feature>
<feature type="helix" evidence="7">
    <location>
        <begin position="138"/>
        <end position="150"/>
    </location>
</feature>
<feature type="strand" evidence="7">
    <location>
        <begin position="153"/>
        <end position="161"/>
    </location>
</feature>
<feature type="helix" evidence="7">
    <location>
        <begin position="164"/>
        <end position="171"/>
    </location>
</feature>
<feature type="strand" evidence="7">
    <location>
        <begin position="182"/>
        <end position="186"/>
    </location>
</feature>
<feature type="helix" evidence="7">
    <location>
        <begin position="194"/>
        <end position="201"/>
    </location>
</feature>
<feature type="turn" evidence="7">
    <location>
        <begin position="202"/>
        <end position="204"/>
    </location>
</feature>
<feature type="strand" evidence="7">
    <location>
        <begin position="206"/>
        <end position="210"/>
    </location>
</feature>
<feature type="helix" evidence="8">
    <location>
        <begin position="228"/>
        <end position="230"/>
    </location>
</feature>
<feature type="helix" evidence="7">
    <location>
        <begin position="232"/>
        <end position="241"/>
    </location>
</feature>
<feature type="helix" evidence="7">
    <location>
        <begin position="245"/>
        <end position="254"/>
    </location>
</feature>
<feature type="turn" evidence="7">
    <location>
        <begin position="255"/>
        <end position="257"/>
    </location>
</feature>
<feature type="helix" evidence="7">
    <location>
        <begin position="267"/>
        <end position="273"/>
    </location>
</feature>
<feature type="helix" evidence="7">
    <location>
        <begin position="283"/>
        <end position="290"/>
    </location>
</feature>
<feature type="helix" evidence="7">
    <location>
        <begin position="302"/>
        <end position="304"/>
    </location>
</feature>
<feature type="helix" evidence="7">
    <location>
        <begin position="311"/>
        <end position="313"/>
    </location>
</feature>
<reference key="1">
    <citation type="journal article" date="2004" name="Nature">
        <title>Genome sequence of the Brown Norway rat yields insights into mammalian evolution.</title>
        <authorList>
            <person name="Gibbs R.A."/>
            <person name="Weinstock G.M."/>
            <person name="Metzker M.L."/>
            <person name="Muzny D.M."/>
            <person name="Sodergren E.J."/>
            <person name="Scherer S."/>
            <person name="Scott G."/>
            <person name="Steffen D."/>
            <person name="Worley K.C."/>
            <person name="Burch P.E."/>
            <person name="Okwuonu G."/>
            <person name="Hines S."/>
            <person name="Lewis L."/>
            <person name="Deramo C."/>
            <person name="Delgado O."/>
            <person name="Dugan-Rocha S."/>
            <person name="Miner G."/>
            <person name="Morgan M."/>
            <person name="Hawes A."/>
            <person name="Gill R."/>
            <person name="Holt R.A."/>
            <person name="Adams M.D."/>
            <person name="Amanatides P.G."/>
            <person name="Baden-Tillson H."/>
            <person name="Barnstead M."/>
            <person name="Chin S."/>
            <person name="Evans C.A."/>
            <person name="Ferriera S."/>
            <person name="Fosler C."/>
            <person name="Glodek A."/>
            <person name="Gu Z."/>
            <person name="Jennings D."/>
            <person name="Kraft C.L."/>
            <person name="Nguyen T."/>
            <person name="Pfannkoch C.M."/>
            <person name="Sitter C."/>
            <person name="Sutton G.G."/>
            <person name="Venter J.C."/>
            <person name="Woodage T."/>
            <person name="Smith D."/>
            <person name="Lee H.-M."/>
            <person name="Gustafson E."/>
            <person name="Cahill P."/>
            <person name="Kana A."/>
            <person name="Doucette-Stamm L."/>
            <person name="Weinstock K."/>
            <person name="Fechtel K."/>
            <person name="Weiss R.B."/>
            <person name="Dunn D.M."/>
            <person name="Green E.D."/>
            <person name="Blakesley R.W."/>
            <person name="Bouffard G.G."/>
            <person name="De Jong P.J."/>
            <person name="Osoegawa K."/>
            <person name="Zhu B."/>
            <person name="Marra M."/>
            <person name="Schein J."/>
            <person name="Bosdet I."/>
            <person name="Fjell C."/>
            <person name="Jones S."/>
            <person name="Krzywinski M."/>
            <person name="Mathewson C."/>
            <person name="Siddiqui A."/>
            <person name="Wye N."/>
            <person name="McPherson J."/>
            <person name="Zhao S."/>
            <person name="Fraser C.M."/>
            <person name="Shetty J."/>
            <person name="Shatsman S."/>
            <person name="Geer K."/>
            <person name="Chen Y."/>
            <person name="Abramzon S."/>
            <person name="Nierman W.C."/>
            <person name="Havlak P.H."/>
            <person name="Chen R."/>
            <person name="Durbin K.J."/>
            <person name="Egan A."/>
            <person name="Ren Y."/>
            <person name="Song X.-Z."/>
            <person name="Li B."/>
            <person name="Liu Y."/>
            <person name="Qin X."/>
            <person name="Cawley S."/>
            <person name="Cooney A.J."/>
            <person name="D'Souza L.M."/>
            <person name="Martin K."/>
            <person name="Wu J.Q."/>
            <person name="Gonzalez-Garay M.L."/>
            <person name="Jackson A.R."/>
            <person name="Kalafus K.J."/>
            <person name="McLeod M.P."/>
            <person name="Milosavljevic A."/>
            <person name="Virk D."/>
            <person name="Volkov A."/>
            <person name="Wheeler D.A."/>
            <person name="Zhang Z."/>
            <person name="Bailey J.A."/>
            <person name="Eichler E.E."/>
            <person name="Tuzun E."/>
            <person name="Birney E."/>
            <person name="Mongin E."/>
            <person name="Ureta-Vidal A."/>
            <person name="Woodwark C."/>
            <person name="Zdobnov E."/>
            <person name="Bork P."/>
            <person name="Suyama M."/>
            <person name="Torrents D."/>
            <person name="Alexandersson M."/>
            <person name="Trask B.J."/>
            <person name="Young J.M."/>
            <person name="Huang H."/>
            <person name="Wang H."/>
            <person name="Xing H."/>
            <person name="Daniels S."/>
            <person name="Gietzen D."/>
            <person name="Schmidt J."/>
            <person name="Stevens K."/>
            <person name="Vitt U."/>
            <person name="Wingrove J."/>
            <person name="Camara F."/>
            <person name="Mar Alba M."/>
            <person name="Abril J.F."/>
            <person name="Guigo R."/>
            <person name="Smit A."/>
            <person name="Dubchak I."/>
            <person name="Rubin E.M."/>
            <person name="Couronne O."/>
            <person name="Poliakov A."/>
            <person name="Huebner N."/>
            <person name="Ganten D."/>
            <person name="Goesele C."/>
            <person name="Hummel O."/>
            <person name="Kreitler T."/>
            <person name="Lee Y.-A."/>
            <person name="Monti J."/>
            <person name="Schulz H."/>
            <person name="Zimdahl H."/>
            <person name="Himmelbauer H."/>
            <person name="Lehrach H."/>
            <person name="Jacob H.J."/>
            <person name="Bromberg S."/>
            <person name="Gullings-Handley J."/>
            <person name="Jensen-Seaman M.I."/>
            <person name="Kwitek A.E."/>
            <person name="Lazar J."/>
            <person name="Pasko D."/>
            <person name="Tonellato P.J."/>
            <person name="Twigger S."/>
            <person name="Ponting C.P."/>
            <person name="Duarte J.M."/>
            <person name="Rice S."/>
            <person name="Goodstadt L."/>
            <person name="Beatson S.A."/>
            <person name="Emes R.D."/>
            <person name="Winter E.E."/>
            <person name="Webber C."/>
            <person name="Brandt P."/>
            <person name="Nyakatura G."/>
            <person name="Adetobi M."/>
            <person name="Chiaromonte F."/>
            <person name="Elnitski L."/>
            <person name="Eswara P."/>
            <person name="Hardison R.C."/>
            <person name="Hou M."/>
            <person name="Kolbe D."/>
            <person name="Makova K."/>
            <person name="Miller W."/>
            <person name="Nekrutenko A."/>
            <person name="Riemer C."/>
            <person name="Schwartz S."/>
            <person name="Taylor J."/>
            <person name="Yang S."/>
            <person name="Zhang Y."/>
            <person name="Lindpaintner K."/>
            <person name="Andrews T.D."/>
            <person name="Caccamo M."/>
            <person name="Clamp M."/>
            <person name="Clarke L."/>
            <person name="Curwen V."/>
            <person name="Durbin R.M."/>
            <person name="Eyras E."/>
            <person name="Searle S.M."/>
            <person name="Cooper G.M."/>
            <person name="Batzoglou S."/>
            <person name="Brudno M."/>
            <person name="Sidow A."/>
            <person name="Stone E.A."/>
            <person name="Payseur B.A."/>
            <person name="Bourque G."/>
            <person name="Lopez-Otin C."/>
            <person name="Puente X.S."/>
            <person name="Chakrabarti K."/>
            <person name="Chatterji S."/>
            <person name="Dewey C."/>
            <person name="Pachter L."/>
            <person name="Bray N."/>
            <person name="Yap V.B."/>
            <person name="Caspi A."/>
            <person name="Tesler G."/>
            <person name="Pevzner P.A."/>
            <person name="Haussler D."/>
            <person name="Roskin K.M."/>
            <person name="Baertsch R."/>
            <person name="Clawson H."/>
            <person name="Furey T.S."/>
            <person name="Hinrichs A.S."/>
            <person name="Karolchik D."/>
            <person name="Kent W.J."/>
            <person name="Rosenbloom K.R."/>
            <person name="Trumbower H."/>
            <person name="Weirauch M."/>
            <person name="Cooper D.N."/>
            <person name="Stenson P.D."/>
            <person name="Ma B."/>
            <person name="Brent M."/>
            <person name="Arumugam M."/>
            <person name="Shteynberg D."/>
            <person name="Copley R.R."/>
            <person name="Taylor M.S."/>
            <person name="Riethman H."/>
            <person name="Mudunuri U."/>
            <person name="Peterson J."/>
            <person name="Guyer M."/>
            <person name="Felsenfeld A."/>
            <person name="Old S."/>
            <person name="Mockrin S."/>
            <person name="Collins F.S."/>
        </authorList>
    </citation>
    <scope>NUCLEOTIDE SEQUENCE [LARGE SCALE GENOMIC DNA]</scope>
    <source>
        <strain>Brown Norway</strain>
    </source>
</reference>
<reference key="2">
    <citation type="submission" date="2005-07" db="EMBL/GenBank/DDBJ databases">
        <authorList>
            <person name="Mural R.J."/>
            <person name="Adams M.D."/>
            <person name="Myers E.W."/>
            <person name="Smith H.O."/>
            <person name="Venter J.C."/>
        </authorList>
    </citation>
    <scope>NUCLEOTIDE SEQUENCE [LARGE SCALE GENOMIC DNA]</scope>
    <source>
        <strain>Brown Norway</strain>
    </source>
</reference>
<reference key="3">
    <citation type="journal article" date="2004" name="Genome Res.">
        <title>The status, quality, and expansion of the NIH full-length cDNA project: the Mammalian Gene Collection (MGC).</title>
        <authorList>
            <consortium name="The MGC Project Team"/>
        </authorList>
    </citation>
    <scope>NUCLEOTIDE SEQUENCE [LARGE SCALE MRNA]</scope>
    <source>
        <tissue>Ovary</tissue>
    </source>
</reference>
<reference key="4">
    <citation type="journal article" date="2010" name="Biol. Pharm. Bull.">
        <title>Rat aldose reductase-like protein (AKR1B14) efficiently reduces the lipid peroxidation product 4-oxo-2-nonenal.</title>
        <authorList>
            <person name="Endo S."/>
            <person name="Matsunaga T."/>
            <person name="Fujita A."/>
            <person name="Tajima K."/>
            <person name="El-Kabbani O."/>
            <person name="Hara A."/>
        </authorList>
    </citation>
    <scope>FUNCTION</scope>
    <scope>CATALYTIC ACTIVITY</scope>
    <scope>BIOPHYSICOCHEMICAL PROPERTIES</scope>
    <scope>ACTIVITY REGULATION</scope>
</reference>
<reference key="5">
    <citation type="journal article" date="2011" name="Bioorg. Med. Chem. Lett.">
        <title>Structure of rat aldose reductase-like protein AKR1B14 holoenzyme: Probing the role of His269 in coenzyme binding by site-directed mutagenesis.</title>
        <authorList>
            <person name="Sundaram K."/>
            <person name="Dhagat U."/>
            <person name="Endo S."/>
            <person name="Chung R."/>
            <person name="Matsunaga T."/>
            <person name="Hara A."/>
            <person name="El-Kabbani O."/>
        </authorList>
    </citation>
    <scope>X-RAY CRYSTALLOGRAPHY (1.86 ANGSTROMS) IN COMPLEX WITH NADP</scope>
    <scope>CATALYTIC ACTIVITY</scope>
    <scope>BIOPHYSICOCHEMICAL PROPERTIES</scope>
    <scope>MUTAGENESIS OF HIS-269</scope>
</reference>
<keyword id="KW-0002">3D-structure</keyword>
<keyword id="KW-0963">Cytoplasm</keyword>
<keyword id="KW-0521">NADP</keyword>
<keyword id="KW-0560">Oxidoreductase</keyword>
<keyword id="KW-1185">Reference proteome</keyword>